<protein>
    <recommendedName>
        <fullName>Non-secretory ribonuclease</fullName>
        <ecNumber evidence="3">4.6.1.18</ecNumber>
    </recommendedName>
    <alternativeName>
        <fullName>Eosinophil-derived neurotoxin</fullName>
    </alternativeName>
    <alternativeName>
        <fullName>RNase UpI-2</fullName>
    </alternativeName>
    <alternativeName>
        <fullName>Ribonuclease 2</fullName>
        <shortName>RNase 2</shortName>
    </alternativeName>
    <alternativeName>
        <fullName>Ribonuclease US</fullName>
    </alternativeName>
</protein>
<name>RNAS2_NOMLE</name>
<proteinExistence type="inferred from homology"/>
<keyword id="KW-1015">Disulfide bond</keyword>
<keyword id="KW-0255">Endonuclease</keyword>
<keyword id="KW-0325">Glycoprotein</keyword>
<keyword id="KW-0378">Hydrolase</keyword>
<keyword id="KW-0456">Lyase</keyword>
<keyword id="KW-0458">Lysosome</keyword>
<keyword id="KW-0944">Nitration</keyword>
<keyword id="KW-0540">Nuclease</keyword>
<keyword id="KW-1185">Reference proteome</keyword>
<keyword id="KW-0732">Signal</keyword>
<reference key="1">
    <citation type="journal article" date="2002" name="Proc. Natl. Acad. Sci. U.S.A.">
        <title>Complementary advantageous substitutions in the evolution of an antiviral RNase of higher primates.</title>
        <authorList>
            <person name="Zhang J."/>
            <person name="Rosenberg H.F."/>
        </authorList>
    </citation>
    <scope>NUCLEOTIDE SEQUENCE [GENOMIC DNA]</scope>
</reference>
<comment type="function">
    <text evidence="1">This is a non-secretory ribonuclease. It is a pyrimidine specific nuclease with a slight preference for U. Cytotoxin and helminthotoxin. Possesses a wide variety of biological activities (By similarity).</text>
</comment>
<comment type="catalytic activity">
    <reaction evidence="3">
        <text>an [RNA] containing cytidine + H2O = an [RNA]-3'-cytidine-3'-phosphate + a 5'-hydroxy-ribonucleotide-3'-[RNA].</text>
        <dbReference type="EC" id="4.6.1.18"/>
    </reaction>
</comment>
<comment type="catalytic activity">
    <reaction evidence="3">
        <text>an [RNA] containing uridine + H2O = an [RNA]-3'-uridine-3'-phosphate + a 5'-hydroxy-ribonucleotide-3'-[RNA].</text>
        <dbReference type="EC" id="4.6.1.18"/>
    </reaction>
</comment>
<comment type="subunit">
    <text evidence="1">Interacts with and forms a tight 1:1 complex with RNH1. Dimerization of two such complexes may occur (By similarity).</text>
</comment>
<comment type="subcellular location">
    <subcellularLocation>
        <location evidence="5">Lysosome</location>
    </subcellularLocation>
    <subcellularLocation>
        <location evidence="1">Cytoplasmic granule</location>
    </subcellularLocation>
    <text evidence="1">Matrix of eosinophil's large specific granule.</text>
</comment>
<comment type="similarity">
    <text evidence="5">Belongs to the pancreatic ribonuclease family.</text>
</comment>
<feature type="signal peptide" evidence="1">
    <location>
        <begin position="1"/>
        <end position="27"/>
    </location>
</feature>
<feature type="chain" id="PRO_0000030875" description="Non-secretory ribonuclease">
    <location>
        <begin position="28"/>
        <end position="161"/>
    </location>
</feature>
<feature type="active site" description="Proton acceptor" evidence="1">
    <location>
        <position position="42"/>
    </location>
</feature>
<feature type="active site" description="Proton donor" evidence="1">
    <location>
        <position position="156"/>
    </location>
</feature>
<feature type="binding site" evidence="1">
    <location>
        <begin position="65"/>
        <end position="69"/>
    </location>
    <ligand>
        <name>substrate</name>
    </ligand>
</feature>
<feature type="modified residue" description="3'-nitrotyrosine" evidence="2">
    <location>
        <position position="60"/>
    </location>
</feature>
<feature type="glycosylation site" description="C-linked (Man) tryptophan" evidence="2">
    <location>
        <position position="34"/>
    </location>
</feature>
<feature type="glycosylation site" description="N-linked (GlcNAc...) asparagine" evidence="4">
    <location>
        <position position="44"/>
    </location>
</feature>
<feature type="glycosylation site" description="N-linked (GlcNAc...) asparagine" evidence="4">
    <location>
        <position position="86"/>
    </location>
</feature>
<feature type="glycosylation site" description="N-linked (GlcNAc...) asparagine" evidence="4">
    <location>
        <position position="92"/>
    </location>
</feature>
<feature type="glycosylation site" description="N-linked (GlcNAc...) asparagine" evidence="4">
    <location>
        <position position="111"/>
    </location>
</feature>
<feature type="glycosylation site" description="N-linked (GlcNAc...) asparagine" evidence="4">
    <location>
        <position position="119"/>
    </location>
</feature>
<feature type="disulfide bond" evidence="1">
    <location>
        <begin position="50"/>
        <end position="110"/>
    </location>
</feature>
<feature type="disulfide bond" evidence="1">
    <location>
        <begin position="64"/>
        <end position="123"/>
    </location>
</feature>
<feature type="disulfide bond" evidence="1">
    <location>
        <begin position="82"/>
        <end position="138"/>
    </location>
</feature>
<feature type="disulfide bond" evidence="1">
    <location>
        <begin position="89"/>
        <end position="98"/>
    </location>
</feature>
<evidence type="ECO:0000250" key="1"/>
<evidence type="ECO:0000250" key="2">
    <source>
        <dbReference type="UniProtKB" id="P10153"/>
    </source>
</evidence>
<evidence type="ECO:0000250" key="3">
    <source>
        <dbReference type="UniProtKB" id="P47784"/>
    </source>
</evidence>
<evidence type="ECO:0000255" key="4"/>
<evidence type="ECO:0000305" key="5"/>
<sequence>MVPKLFTSQICLLLLLGLMGVEGSLHAKPQQFTWAQWFEIQHINMTSQQCTNAMRVINNYQRRCKNQNTFLRTTFANVVNVCGNPNMTCPSNKTRKNCHQSGSQVPLIHCNLTTPSPQNISNCGYAQTPANMFYIVACDNRDQRRDPPQYPVVPVHLDRII</sequence>
<organism>
    <name type="scientific">Nomascus leucogenys</name>
    <name type="common">Northern white-cheeked gibbon</name>
    <name type="synonym">Hylobates leucogenys</name>
    <dbReference type="NCBI Taxonomy" id="61853"/>
    <lineage>
        <taxon>Eukaryota</taxon>
        <taxon>Metazoa</taxon>
        <taxon>Chordata</taxon>
        <taxon>Craniata</taxon>
        <taxon>Vertebrata</taxon>
        <taxon>Euteleostomi</taxon>
        <taxon>Mammalia</taxon>
        <taxon>Eutheria</taxon>
        <taxon>Euarchontoglires</taxon>
        <taxon>Primates</taxon>
        <taxon>Haplorrhini</taxon>
        <taxon>Catarrhini</taxon>
        <taxon>Hylobatidae</taxon>
        <taxon>Nomascus</taxon>
    </lineage>
</organism>
<gene>
    <name type="primary">RNASE2</name>
    <name type="synonym">EDN</name>
    <name type="synonym">RNS2</name>
</gene>
<dbReference type="EC" id="4.6.1.18" evidence="3"/>
<dbReference type="EMBL" id="AF479628">
    <property type="protein sequence ID" value="AAM14435.1"/>
    <property type="molecule type" value="Genomic_DNA"/>
</dbReference>
<dbReference type="SMR" id="Q8SPY8"/>
<dbReference type="FunCoup" id="Q8SPY8">
    <property type="interactions" value="27"/>
</dbReference>
<dbReference type="GlyCosmos" id="Q8SPY8">
    <property type="glycosylation" value="6 sites, No reported glycans"/>
</dbReference>
<dbReference type="eggNOG" id="ENOG502TF52">
    <property type="taxonomic scope" value="Eukaryota"/>
</dbReference>
<dbReference type="InParanoid" id="Q8SPY8"/>
<dbReference type="Proteomes" id="UP000001073">
    <property type="component" value="Unplaced"/>
</dbReference>
<dbReference type="GO" id="GO:0005615">
    <property type="term" value="C:extracellular space"/>
    <property type="evidence" value="ECO:0007669"/>
    <property type="project" value="TreeGrafter"/>
</dbReference>
<dbReference type="GO" id="GO:0005764">
    <property type="term" value="C:lysosome"/>
    <property type="evidence" value="ECO:0007669"/>
    <property type="project" value="UniProtKB-SubCell"/>
</dbReference>
<dbReference type="GO" id="GO:0016829">
    <property type="term" value="F:lyase activity"/>
    <property type="evidence" value="ECO:0007669"/>
    <property type="project" value="UniProtKB-KW"/>
</dbReference>
<dbReference type="GO" id="GO:0003676">
    <property type="term" value="F:nucleic acid binding"/>
    <property type="evidence" value="ECO:0007669"/>
    <property type="project" value="InterPro"/>
</dbReference>
<dbReference type="GO" id="GO:0004522">
    <property type="term" value="F:ribonuclease A activity"/>
    <property type="evidence" value="ECO:0007669"/>
    <property type="project" value="UniProtKB-EC"/>
</dbReference>
<dbReference type="GO" id="GO:0006935">
    <property type="term" value="P:chemotaxis"/>
    <property type="evidence" value="ECO:0007669"/>
    <property type="project" value="TreeGrafter"/>
</dbReference>
<dbReference type="GO" id="GO:0051607">
    <property type="term" value="P:defense response to virus"/>
    <property type="evidence" value="ECO:0007669"/>
    <property type="project" value="UniProtKB-ARBA"/>
</dbReference>
<dbReference type="GO" id="GO:0002227">
    <property type="term" value="P:innate immune response in mucosa"/>
    <property type="evidence" value="ECO:0007669"/>
    <property type="project" value="TreeGrafter"/>
</dbReference>
<dbReference type="CDD" id="cd06265">
    <property type="entry name" value="RNase_A_canonical"/>
    <property type="match status" value="1"/>
</dbReference>
<dbReference type="FunFam" id="3.10.130.10:FF:000001">
    <property type="entry name" value="Ribonuclease pancreatic"/>
    <property type="match status" value="1"/>
</dbReference>
<dbReference type="Gene3D" id="3.10.130.10">
    <property type="entry name" value="Ribonuclease A-like domain"/>
    <property type="match status" value="1"/>
</dbReference>
<dbReference type="InterPro" id="IPR001427">
    <property type="entry name" value="RNaseA"/>
</dbReference>
<dbReference type="InterPro" id="IPR036816">
    <property type="entry name" value="RNaseA-like_dom_sf"/>
</dbReference>
<dbReference type="InterPro" id="IPR023411">
    <property type="entry name" value="RNaseA_AS"/>
</dbReference>
<dbReference type="InterPro" id="IPR023412">
    <property type="entry name" value="RNaseA_domain"/>
</dbReference>
<dbReference type="PANTHER" id="PTHR11437:SF62">
    <property type="entry name" value="NON-SECRETORY RIBONUCLEASE"/>
    <property type="match status" value="1"/>
</dbReference>
<dbReference type="PANTHER" id="PTHR11437">
    <property type="entry name" value="RIBONUCLEASE"/>
    <property type="match status" value="1"/>
</dbReference>
<dbReference type="Pfam" id="PF00074">
    <property type="entry name" value="RnaseA"/>
    <property type="match status" value="1"/>
</dbReference>
<dbReference type="PRINTS" id="PR00794">
    <property type="entry name" value="RIBONUCLEASE"/>
</dbReference>
<dbReference type="SMART" id="SM00092">
    <property type="entry name" value="RNAse_Pc"/>
    <property type="match status" value="1"/>
</dbReference>
<dbReference type="SUPFAM" id="SSF54076">
    <property type="entry name" value="RNase A-like"/>
    <property type="match status" value="1"/>
</dbReference>
<dbReference type="PROSITE" id="PS00127">
    <property type="entry name" value="RNASE_PANCREATIC"/>
    <property type="match status" value="1"/>
</dbReference>
<accession>Q8SPY8</accession>